<reference key="1">
    <citation type="journal article" date="2006" name="Nat. Biotechnol.">
        <title>Genome sequence of the ubiquitous hydrocarbon-degrading marine bacterium Alcanivorax borkumensis.</title>
        <authorList>
            <person name="Schneiker S."/>
            <person name="Martins dos Santos V.A.P."/>
            <person name="Bartels D."/>
            <person name="Bekel T."/>
            <person name="Brecht M."/>
            <person name="Buhrmester J."/>
            <person name="Chernikova T.N."/>
            <person name="Denaro R."/>
            <person name="Ferrer M."/>
            <person name="Gertler C."/>
            <person name="Goesmann A."/>
            <person name="Golyshina O.V."/>
            <person name="Kaminski F."/>
            <person name="Khachane A.N."/>
            <person name="Lang S."/>
            <person name="Linke B."/>
            <person name="McHardy A.C."/>
            <person name="Meyer F."/>
            <person name="Nechitaylo T."/>
            <person name="Puehler A."/>
            <person name="Regenhardt D."/>
            <person name="Rupp O."/>
            <person name="Sabirova J.S."/>
            <person name="Selbitschka W."/>
            <person name="Yakimov M.M."/>
            <person name="Timmis K.N."/>
            <person name="Vorhoelter F.-J."/>
            <person name="Weidner S."/>
            <person name="Kaiser O."/>
            <person name="Golyshin P.N."/>
        </authorList>
    </citation>
    <scope>NUCLEOTIDE SEQUENCE [LARGE SCALE GENOMIC DNA]</scope>
    <source>
        <strain>ATCC 700651 / DSM 11573 / NCIMB 13689 / SK2</strain>
    </source>
</reference>
<gene>
    <name evidence="1" type="primary">rpmA</name>
    <name type="ordered locus">ABO_0453</name>
</gene>
<name>RL27_ALCBS</name>
<proteinExistence type="inferred from homology"/>
<sequence>MAHKKAGGSTRNGRDSESKRLGVKRYGGQVVSAGEIIVRQRGTKFHAGVNAGMGKDHTIFAKETGRVKFEVKGPLNRKYVVIEPVA</sequence>
<keyword id="KW-1185">Reference proteome</keyword>
<keyword id="KW-0687">Ribonucleoprotein</keyword>
<keyword id="KW-0689">Ribosomal protein</keyword>
<comment type="similarity">
    <text evidence="1">Belongs to the bacterial ribosomal protein bL27 family.</text>
</comment>
<dbReference type="EMBL" id="AM286690">
    <property type="protein sequence ID" value="CAL15901.1"/>
    <property type="molecule type" value="Genomic_DNA"/>
</dbReference>
<dbReference type="RefSeq" id="WP_011587739.1">
    <property type="nucleotide sequence ID" value="NC_008260.1"/>
</dbReference>
<dbReference type="SMR" id="Q0VSE7"/>
<dbReference type="STRING" id="393595.ABO_0453"/>
<dbReference type="KEGG" id="abo:ABO_0453"/>
<dbReference type="eggNOG" id="COG0211">
    <property type="taxonomic scope" value="Bacteria"/>
</dbReference>
<dbReference type="HOGENOM" id="CLU_095424_4_1_6"/>
<dbReference type="OrthoDB" id="9803474at2"/>
<dbReference type="Proteomes" id="UP000008871">
    <property type="component" value="Chromosome"/>
</dbReference>
<dbReference type="GO" id="GO:0022625">
    <property type="term" value="C:cytosolic large ribosomal subunit"/>
    <property type="evidence" value="ECO:0007669"/>
    <property type="project" value="TreeGrafter"/>
</dbReference>
<dbReference type="GO" id="GO:0003735">
    <property type="term" value="F:structural constituent of ribosome"/>
    <property type="evidence" value="ECO:0007669"/>
    <property type="project" value="InterPro"/>
</dbReference>
<dbReference type="GO" id="GO:0006412">
    <property type="term" value="P:translation"/>
    <property type="evidence" value="ECO:0007669"/>
    <property type="project" value="UniProtKB-UniRule"/>
</dbReference>
<dbReference type="FunFam" id="2.40.50.100:FF:000001">
    <property type="entry name" value="50S ribosomal protein L27"/>
    <property type="match status" value="1"/>
</dbReference>
<dbReference type="Gene3D" id="2.40.50.100">
    <property type="match status" value="1"/>
</dbReference>
<dbReference type="HAMAP" id="MF_00539">
    <property type="entry name" value="Ribosomal_bL27"/>
    <property type="match status" value="1"/>
</dbReference>
<dbReference type="InterPro" id="IPR001684">
    <property type="entry name" value="Ribosomal_bL27"/>
</dbReference>
<dbReference type="InterPro" id="IPR018261">
    <property type="entry name" value="Ribosomal_bL27_CS"/>
</dbReference>
<dbReference type="NCBIfam" id="TIGR00062">
    <property type="entry name" value="L27"/>
    <property type="match status" value="1"/>
</dbReference>
<dbReference type="PANTHER" id="PTHR15893:SF0">
    <property type="entry name" value="LARGE RIBOSOMAL SUBUNIT PROTEIN BL27M"/>
    <property type="match status" value="1"/>
</dbReference>
<dbReference type="PANTHER" id="PTHR15893">
    <property type="entry name" value="RIBOSOMAL PROTEIN L27"/>
    <property type="match status" value="1"/>
</dbReference>
<dbReference type="Pfam" id="PF01016">
    <property type="entry name" value="Ribosomal_L27"/>
    <property type="match status" value="1"/>
</dbReference>
<dbReference type="PRINTS" id="PR00063">
    <property type="entry name" value="RIBOSOMALL27"/>
</dbReference>
<dbReference type="SUPFAM" id="SSF110324">
    <property type="entry name" value="Ribosomal L27 protein-like"/>
    <property type="match status" value="1"/>
</dbReference>
<dbReference type="PROSITE" id="PS00831">
    <property type="entry name" value="RIBOSOMAL_L27"/>
    <property type="match status" value="1"/>
</dbReference>
<protein>
    <recommendedName>
        <fullName evidence="1">Large ribosomal subunit protein bL27</fullName>
    </recommendedName>
    <alternativeName>
        <fullName evidence="3">50S ribosomal protein L27</fullName>
    </alternativeName>
</protein>
<organism>
    <name type="scientific">Alcanivorax borkumensis (strain ATCC 700651 / DSM 11573 / NCIMB 13689 / SK2)</name>
    <dbReference type="NCBI Taxonomy" id="393595"/>
    <lineage>
        <taxon>Bacteria</taxon>
        <taxon>Pseudomonadati</taxon>
        <taxon>Pseudomonadota</taxon>
        <taxon>Gammaproteobacteria</taxon>
        <taxon>Oceanospirillales</taxon>
        <taxon>Alcanivoracaceae</taxon>
        <taxon>Alcanivorax</taxon>
    </lineage>
</organism>
<accession>Q0VSE7</accession>
<evidence type="ECO:0000255" key="1">
    <source>
        <dbReference type="HAMAP-Rule" id="MF_00539"/>
    </source>
</evidence>
<evidence type="ECO:0000256" key="2">
    <source>
        <dbReference type="SAM" id="MobiDB-lite"/>
    </source>
</evidence>
<evidence type="ECO:0000305" key="3"/>
<feature type="chain" id="PRO_1000017401" description="Large ribosomal subunit protein bL27">
    <location>
        <begin position="1"/>
        <end position="86"/>
    </location>
</feature>
<feature type="region of interest" description="Disordered" evidence="2">
    <location>
        <begin position="1"/>
        <end position="24"/>
    </location>
</feature>